<sequence>MTSTGQDSSTRQRKSRHNPQSPLQESSATLKRGGKKCAVPHSSPNLAEVKKKGKMKKLSQPAEEDLVVGLQGLDLNPETRVPVGTGLVFDEQLNDFHCLWDDSFPESPERLHAIREQLILEGLLGRCVSFQARFAEKEELMLVHSLEYIDLMETTQYMNEGELRVLAETYDSVYLHPNSYSCACLATGSVLRLVDALMGAEIRNGMAVIRPPGHHAQHNLMDGYCMFNHLAVAARYAQKKHRIQRVLIVDWDVHHGQGTQFIFDQDPSVLYFSIHRYEHGRFWPHLKASNWSTIGFGQGQGYTINVPWNQTGMRDADYIAAFLHILLPVASEFQPQLVLVAAGFDALHGDPKGEMAATPAGFAHLTHLLMGLAGGKLILSLEGGYNLRALAKGVSASLHTLLGDPCPMLESCVVPCASAQTSIYCTLEALEPFWEVLERSVETQEEDEVEEAVLEEEEEEGGWEATALPMDTWPLLQNRTGLVYDEKMMSHCNLWDNHHPETPQRILRIMCHLEEVGLAARCLILPARPALDSELLTCHSAEYVEHLRTTEKMKTRDLHREGANFDSIYICPSTFACAKLATGAACRLVEAVLSGEVLNGIAVVRPPGHHAEPNAACGFCFFNSVAVAARHAQIIAGRALRILIVDWDVHHGNGTQHIFEDDPSVLYVSLHRYDRGTFFPMGDEGASSQVGRDAGIGFTVNVPWNGPRMGDADYLAAWHRLVLPIAYEFNPELVLISAGFDAAQGDPLGGCQVTPEGYAHLTHLLMGLAGGRIILILEGGYNLASISESMAACTHSLLGDPPPQLTLLRPPQSGALVSISEVIQVHRKYWRSLRLMKMEDKEECSSSRLVIKKLPPTASPVSAKEMTTPKGKVPEESVRKTIAALPGKESTLGQAKSKMAKAVLAQGQSSEQAAKGTTLDLATSKETVGGATTDLWASAAAPENFPNQTTSVEALGETEPTPPASHTNKQTTGASPLQGVTAQQSLQLGVLSTLELSREAEEAHDSEEGLLGEAAGGQDMNSLMLTQGFGDFNTQDVFYAVTPLSWCPHLMAVCPIPAAGLDVSQPCKTCGTVQENWVCLTCYQVYCSRYVNAHMVCHHEASEHPLVLSCVDLSTWCYVCQAYVHHEDLQDVKNAAHQNKFGEDMPHSH</sequence>
<keyword id="KW-0009">Actin-binding</keyword>
<keyword id="KW-0072">Autophagy</keyword>
<keyword id="KW-0966">Cell projection</keyword>
<keyword id="KW-0156">Chromatin regulator</keyword>
<keyword id="KW-0963">Cytoplasm</keyword>
<keyword id="KW-0206">Cytoskeleton</keyword>
<keyword id="KW-0378">Hydrolase</keyword>
<keyword id="KW-0479">Metal-binding</keyword>
<keyword id="KW-0488">Methylation</keyword>
<keyword id="KW-0539">Nucleus</keyword>
<keyword id="KW-0597">Phosphoprotein</keyword>
<keyword id="KW-1185">Reference proteome</keyword>
<keyword id="KW-0677">Repeat</keyword>
<keyword id="KW-0678">Repressor</keyword>
<keyword id="KW-0804">Transcription</keyword>
<keyword id="KW-0805">Transcription regulation</keyword>
<keyword id="KW-0808">Transferase</keyword>
<keyword id="KW-0832">Ubl conjugation</keyword>
<keyword id="KW-0833">Ubl conjugation pathway</keyword>
<keyword id="KW-0862">Zinc</keyword>
<keyword id="KW-0863">Zinc-finger</keyword>
<gene>
    <name evidence="19" type="primary">Hdac6</name>
</gene>
<accession>Q9Z2V5</accession>
<accession>B1AUA6</accession>
<organism>
    <name type="scientific">Mus musculus</name>
    <name type="common">Mouse</name>
    <dbReference type="NCBI Taxonomy" id="10090"/>
    <lineage>
        <taxon>Eukaryota</taxon>
        <taxon>Metazoa</taxon>
        <taxon>Chordata</taxon>
        <taxon>Craniata</taxon>
        <taxon>Vertebrata</taxon>
        <taxon>Euteleostomi</taxon>
        <taxon>Mammalia</taxon>
        <taxon>Eutheria</taxon>
        <taxon>Euarchontoglires</taxon>
        <taxon>Glires</taxon>
        <taxon>Rodentia</taxon>
        <taxon>Myomorpha</taxon>
        <taxon>Muroidea</taxon>
        <taxon>Muridae</taxon>
        <taxon>Murinae</taxon>
        <taxon>Mus</taxon>
        <taxon>Mus</taxon>
    </lineage>
</organism>
<name>HDAC6_MOUSE</name>
<proteinExistence type="evidence at protein level"/>
<feature type="chain" id="PRO_0000114704" description="Protein deacetylase HDAC6">
    <location>
        <begin position="1"/>
        <end position="1149"/>
    </location>
</feature>
<feature type="zinc finger region" description="UBP-type" evidence="3">
    <location>
        <begin position="1045"/>
        <end position="1143"/>
    </location>
</feature>
<feature type="region of interest" description="Disordered" evidence="4">
    <location>
        <begin position="1"/>
        <end position="61"/>
    </location>
</feature>
<feature type="region of interest" description="Histone deacetylase 1">
    <location>
        <begin position="87"/>
        <end position="403"/>
    </location>
</feature>
<feature type="region of interest" description="Histone deacetylase 2">
    <location>
        <begin position="481"/>
        <end position="799"/>
    </location>
</feature>
<feature type="region of interest" description="Disordered" evidence="4">
    <location>
        <begin position="954"/>
        <end position="975"/>
    </location>
</feature>
<feature type="region of interest" description="Ubiquitin binding" evidence="2">
    <location>
        <begin position="1088"/>
        <end position="1090"/>
    </location>
</feature>
<feature type="region of interest" description="Ubiquitin binding" evidence="2">
    <location>
        <begin position="1116"/>
        <end position="1123"/>
    </location>
</feature>
<feature type="short sequence motif" description="Nuclear export signal" evidence="5">
    <location>
        <begin position="66"/>
        <end position="75"/>
    </location>
</feature>
<feature type="compositionally biased region" description="Polar residues" evidence="4">
    <location>
        <begin position="18"/>
        <end position="29"/>
    </location>
</feature>
<feature type="compositionally biased region" description="Polar residues" evidence="4">
    <location>
        <begin position="964"/>
        <end position="975"/>
    </location>
</feature>
<feature type="active site" description="1" evidence="2">
    <location>
        <position position="215"/>
    </location>
</feature>
<feature type="active site" description="2" evidence="2">
    <location>
        <position position="610"/>
    </location>
</feature>
<feature type="binding site" evidence="3">
    <location>
        <position position="1047"/>
    </location>
    <ligand>
        <name>Zn(2+)</name>
        <dbReference type="ChEBI" id="CHEBI:29105"/>
        <label>1</label>
    </ligand>
</feature>
<feature type="binding site" evidence="3">
    <location>
        <position position="1049"/>
    </location>
    <ligand>
        <name>Zn(2+)</name>
        <dbReference type="ChEBI" id="CHEBI:29105"/>
        <label>1</label>
    </ligand>
</feature>
<feature type="binding site" evidence="3">
    <location>
        <position position="1067"/>
    </location>
    <ligand>
        <name>Zn(2+)</name>
        <dbReference type="ChEBI" id="CHEBI:29105"/>
        <label>2</label>
    </ligand>
</feature>
<feature type="binding site" evidence="3">
    <location>
        <position position="1070"/>
    </location>
    <ligand>
        <name>Zn(2+)</name>
        <dbReference type="ChEBI" id="CHEBI:29105"/>
        <label>2</label>
    </ligand>
</feature>
<feature type="binding site" evidence="3">
    <location>
        <position position="1079"/>
    </location>
    <ligand>
        <name>Zn(2+)</name>
        <dbReference type="ChEBI" id="CHEBI:29105"/>
        <label>3</label>
    </ligand>
</feature>
<feature type="binding site" evidence="3">
    <location>
        <position position="1082"/>
    </location>
    <ligand>
        <name>Zn(2+)</name>
        <dbReference type="ChEBI" id="CHEBI:29105"/>
        <label>3</label>
    </ligand>
</feature>
<feature type="binding site" evidence="3">
    <location>
        <position position="1087"/>
    </location>
    <ligand>
        <name>Zn(2+)</name>
        <dbReference type="ChEBI" id="CHEBI:29105"/>
        <label>2</label>
    </ligand>
</feature>
<feature type="binding site" evidence="3">
    <location>
        <position position="1094"/>
    </location>
    <ligand>
        <name>Zn(2+)</name>
        <dbReference type="ChEBI" id="CHEBI:29105"/>
        <label>2</label>
    </ligand>
</feature>
<feature type="binding site" evidence="3">
    <location>
        <position position="1098"/>
    </location>
    <ligand>
        <name>Zn(2+)</name>
        <dbReference type="ChEBI" id="CHEBI:29105"/>
        <label>3</label>
    </ligand>
</feature>
<feature type="binding site" evidence="3">
    <location>
        <position position="1104"/>
    </location>
    <ligand>
        <name>Zn(2+)</name>
        <dbReference type="ChEBI" id="CHEBI:29105"/>
        <label>3</label>
    </ligand>
</feature>
<feature type="binding site" evidence="3">
    <location>
        <position position="1117"/>
    </location>
    <ligand>
        <name>Zn(2+)</name>
        <dbReference type="ChEBI" id="CHEBI:29105"/>
        <label>1</label>
    </ligand>
</feature>
<feature type="binding site" evidence="3">
    <location>
        <position position="1120"/>
    </location>
    <ligand>
        <name>Zn(2+)</name>
        <dbReference type="ChEBI" id="CHEBI:29105"/>
        <label>1</label>
    </ligand>
</feature>
<feature type="modified residue" description="Phosphoserine" evidence="20">
    <location>
        <position position="21"/>
    </location>
</feature>
<feature type="modified residue" description="Omega-N-methylarginine" evidence="21">
    <location>
        <position position="32"/>
    </location>
</feature>
<feature type="modified residue" description="Phosphoserine" evidence="20">
    <location>
        <position position="43"/>
    </location>
</feature>
<feature type="modified residue" description="Phosphothreonine" evidence="2">
    <location>
        <position position="958"/>
    </location>
</feature>
<feature type="modified residue" description="Phosphothreonine" evidence="2">
    <location>
        <position position="961"/>
    </location>
</feature>
<feature type="modified residue" description="Phosphothreonine" evidence="2">
    <location>
        <position position="967"/>
    </location>
</feature>
<feature type="modified residue" description="Phosphothreonine" evidence="2">
    <location>
        <position position="971"/>
    </location>
</feature>
<feature type="modified residue" description="Phosphoserine" evidence="2">
    <location>
        <position position="975"/>
    </location>
</feature>
<feature type="modified residue" description="Phosphoserine" evidence="20">
    <location>
        <position position="1148"/>
    </location>
</feature>
<feature type="mutagenesis site" description="Abolishes accumulation in the cytoplasm; when associated with A-70." evidence="5">
    <original>L</original>
    <variation>A</variation>
    <location>
        <position position="66"/>
    </location>
</feature>
<feature type="mutagenesis site" description="Abolishes accumulation in the cytoplasm; when associated with A-66." evidence="5">
    <original>L</original>
    <variation>A</variation>
    <location>
        <position position="70"/>
    </location>
</feature>
<feature type="mutagenesis site" description="Does not affect accumulation in the cytoplasm." evidence="5">
    <original>DWDVHH</original>
    <variation>NWNVVV</variation>
    <location>
        <begin position="250"/>
        <end position="255"/>
    </location>
</feature>
<feature type="mutagenesis site" description="Does not affect accumulation in the cytoplasm." evidence="5">
    <original>DVHH</original>
    <variation>NVVV</variation>
    <location>
        <begin position="648"/>
        <end position="651"/>
    </location>
</feature>
<feature type="mutagenesis site" description="Does not affect accumulation in the cytoplasm; when associated with A-991." evidence="5">
    <original>L</original>
    <variation>A</variation>
    <location>
        <position position="988"/>
    </location>
</feature>
<feature type="mutagenesis site" description="Does not affect accumulation in the cytoplasm; when associated with A-988." evidence="5">
    <original>L</original>
    <variation>A</variation>
    <location>
        <position position="991"/>
    </location>
</feature>
<feature type="sequence conflict" description="In Ref. 1; AAD09835." evidence="18" ref="1">
    <original>R</original>
    <variation>W</variation>
    <location>
        <position position="133"/>
    </location>
</feature>
<feature type="sequence conflict" description="In Ref. 1; AAD09835." evidence="18" ref="1">
    <original>V</original>
    <variation>I</variation>
    <location>
        <position position="394"/>
    </location>
</feature>
<feature type="sequence conflict" description="In Ref. 1; AAD09835." evidence="18" ref="1">
    <original>T</original>
    <variation>I</variation>
    <location>
        <position position="421"/>
    </location>
</feature>
<feature type="sequence conflict" description="In Ref. 1; AAD09835." evidence="18" ref="1">
    <original>D</original>
    <variation>G</variation>
    <location>
        <position position="532"/>
    </location>
</feature>
<feature type="sequence conflict" description="In Ref. 1; AAD09835." evidence="18" ref="1">
    <original>M</original>
    <variation>S</variation>
    <location>
        <position position="836"/>
    </location>
</feature>
<feature type="sequence conflict" description="In Ref. 1; AAD09835." evidence="18" ref="1">
    <original>I</original>
    <variation>V</variation>
    <location>
        <position position="851"/>
    </location>
</feature>
<feature type="sequence conflict" description="In Ref. 1; AAD09835." evidence="18" ref="1">
    <original>HE</original>
    <variation>QD</variation>
    <location>
        <begin position="1126"/>
        <end position="1127"/>
    </location>
</feature>
<reference key="1">
    <citation type="journal article" date="1999" name="J. Biol. Chem.">
        <title>Identification of a new family of higher eukaryotic histone deacetylases. Coordinate expression of differentiation-dependent chromatin modifiers.</title>
        <authorList>
            <person name="Verdel A."/>
            <person name="Khochbin S."/>
        </authorList>
    </citation>
    <scope>NUCLEOTIDE SEQUENCE [MRNA]</scope>
    <source>
        <strain>C57BL/6J</strain>
        <tissue>Fetus</tissue>
    </source>
</reference>
<reference key="2">
    <citation type="journal article" date="2009" name="PLoS Biol.">
        <title>Lineage-specific biology revealed by a finished genome assembly of the mouse.</title>
        <authorList>
            <person name="Church D.M."/>
            <person name="Goodstadt L."/>
            <person name="Hillier L.W."/>
            <person name="Zody M.C."/>
            <person name="Goldstein S."/>
            <person name="She X."/>
            <person name="Bult C.J."/>
            <person name="Agarwala R."/>
            <person name="Cherry J.L."/>
            <person name="DiCuccio M."/>
            <person name="Hlavina W."/>
            <person name="Kapustin Y."/>
            <person name="Meric P."/>
            <person name="Maglott D."/>
            <person name="Birtle Z."/>
            <person name="Marques A.C."/>
            <person name="Graves T."/>
            <person name="Zhou S."/>
            <person name="Teague B."/>
            <person name="Potamousis K."/>
            <person name="Churas C."/>
            <person name="Place M."/>
            <person name="Herschleb J."/>
            <person name="Runnheim R."/>
            <person name="Forrest D."/>
            <person name="Amos-Landgraf J."/>
            <person name="Schwartz D.C."/>
            <person name="Cheng Z."/>
            <person name="Lindblad-Toh K."/>
            <person name="Eichler E.E."/>
            <person name="Ponting C.P."/>
        </authorList>
    </citation>
    <scope>NUCLEOTIDE SEQUENCE [LARGE SCALE GENOMIC DNA]</scope>
    <source>
        <strain>C57BL/6J</strain>
    </source>
</reference>
<reference key="3">
    <citation type="journal article" date="2000" name="Curr. Biol.">
        <title>Active maintenance of mHDA2/mHDAC6 histone-deacetylase in the cytoplasm.</title>
        <authorList>
            <person name="Verdel A."/>
            <person name="Curtet S."/>
            <person name="Brocard M.P."/>
            <person name="Rousseaux S."/>
            <person name="Lemercier C."/>
            <person name="Yoshida M."/>
            <person name="Khochbin S."/>
        </authorList>
    </citation>
    <scope>SUBCELLULAR LOCATION</scope>
    <scope>NUCLEAR EXPORT SIGNAL</scope>
    <scope>MUTAGENESIS OF LEU-66; LEU-70; 250-ASP--HIS-255; 648-ASP--HIS-651; LEU-988 AND LEU-991</scope>
</reference>
<reference key="4">
    <citation type="journal article" date="2001" name="Mol. Cell. Biol.">
        <title>ETO, a target of t(8;21) in acute leukemia, makes distinct contacts with multiple histone deacetylases and binds mSin3A through its oligomerization domain.</title>
        <authorList>
            <person name="Amann J.M."/>
            <person name="Nip J."/>
            <person name="Strom D.K."/>
            <person name="Lutterbach B."/>
            <person name="Harada H."/>
            <person name="Lenny N."/>
            <person name="Downing J.R."/>
            <person name="Meyers S."/>
            <person name="Hiebert S.W."/>
        </authorList>
    </citation>
    <scope>INTERACTION WITH CBFA2T3</scope>
</reference>
<reference key="5">
    <citation type="journal article" date="2002" name="EMBO J.">
        <title>In vivo destabilization of dynamic microtubules by HDAC6-mediated deacetylation.</title>
        <authorList>
            <person name="Matsuyama A."/>
            <person name="Shimazu T."/>
            <person name="Sumida Y."/>
            <person name="Saito A."/>
            <person name="Yoshimatsu Y."/>
            <person name="Seigneurin-Berny D."/>
            <person name="Osada H."/>
            <person name="Komatsu Y."/>
            <person name="Nishino N."/>
            <person name="Khochbin S."/>
            <person name="Horinouchi S."/>
            <person name="Yoshida M."/>
        </authorList>
    </citation>
    <scope>FUNCTION</scope>
    <scope>CATALYTIC ACTIVITY</scope>
</reference>
<reference key="6">
    <citation type="journal article" date="2003" name="EMBO J.">
        <title>HDAC-6 interacts with and deacetylates tubulin and microtubules in vivo.</title>
        <authorList>
            <person name="Zhang Y."/>
            <person name="Li N."/>
            <person name="Caron C."/>
            <person name="Matthias G."/>
            <person name="Hess D."/>
            <person name="Khochbin S."/>
            <person name="Matthias P."/>
        </authorList>
    </citation>
    <scope>FUNCTION</scope>
    <scope>CATALYTIC ACTIVITY</scope>
    <scope>SUBCELLULAR LOCATION</scope>
</reference>
<reference key="7">
    <citation type="journal article" date="2007" name="Neurochem. Res.">
        <title>Microtubule deacetylases, SirT2 and HDAC6, in the nervous system.</title>
        <authorList>
            <person name="Southwood C.M."/>
            <person name="Peppi M."/>
            <person name="Dryden S."/>
            <person name="Tainsky M.A."/>
            <person name="Gow A."/>
        </authorList>
    </citation>
    <scope>SUBCELLULAR LOCATION</scope>
    <scope>TISSUE SPECIFICITY</scope>
</reference>
<reference key="8">
    <citation type="journal article" date="2010" name="Cell">
        <title>A tissue-specific atlas of mouse protein phosphorylation and expression.</title>
        <authorList>
            <person name="Huttlin E.L."/>
            <person name="Jedrychowski M.P."/>
            <person name="Elias J.E."/>
            <person name="Goswami T."/>
            <person name="Rad R."/>
            <person name="Beausoleil S.A."/>
            <person name="Villen J."/>
            <person name="Haas W."/>
            <person name="Sowa M.E."/>
            <person name="Gygi S.P."/>
        </authorList>
    </citation>
    <scope>PHOSPHORYLATION [LARGE SCALE ANALYSIS] AT SER-21; SER-43 AND SER-1148</scope>
    <scope>IDENTIFICATION BY MASS SPECTROMETRY [LARGE SCALE ANALYSIS]</scope>
    <source>
        <tissue>Brain</tissue>
        <tissue>Brown adipose tissue</tissue>
        <tissue>Heart</tissue>
        <tissue>Kidney</tissue>
        <tissue>Liver</tissue>
        <tissue>Lung</tissue>
        <tissue>Pancreas</tissue>
        <tissue>Spleen</tissue>
        <tissue>Testis</tissue>
    </source>
</reference>
<reference key="9">
    <citation type="journal article" date="2010" name="EMBO J.">
        <title>CYLD negatively regulates cell-cycle progression by inactivating HDAC6 and increasing the levels of acetylated tubulin.</title>
        <authorList>
            <person name="Wickstrom S.A."/>
            <person name="Masoumi K.C."/>
            <person name="Khochbin S."/>
            <person name="Fassler R."/>
            <person name="Massoumi R."/>
        </authorList>
    </citation>
    <scope>FUNCTION</scope>
    <scope>INTERACTION WITH CYLD AND MICROTUBULES</scope>
    <scope>SUBCELLULAR LOCATION</scope>
    <scope>TISSUE SPECIFICITY</scope>
</reference>
<reference key="10">
    <citation type="journal article" date="2010" name="J. Biol. Chem.">
        <title>Zmynd15 encodes a histone deacetylase-dependent transcriptional repressor essential for spermiogenesis and male fertility.</title>
        <authorList>
            <person name="Yan W."/>
            <person name="Si Y."/>
            <person name="Slaymaker S."/>
            <person name="Li J."/>
            <person name="Zheng H."/>
            <person name="Young D.L."/>
            <person name="Aslanian A."/>
            <person name="Saunders L."/>
            <person name="Verdin E."/>
            <person name="Charo I.F."/>
        </authorList>
    </citation>
    <scope>INTERACTION WITH ZMYND15</scope>
</reference>
<reference key="11">
    <citation type="journal article" date="2012" name="Neurochem. Int.">
        <title>SIRT2 interferes with autophagy-mediated degradation of protein aggregates in neuronal cells under proteasome inhibition.</title>
        <authorList>
            <person name="Gal J."/>
            <person name="Bang Y."/>
            <person name="Choi H.J."/>
        </authorList>
    </citation>
    <scope>FUNCTION IN AUTOPHAGY</scope>
    <scope>SUBCELLULAR LOCATION</scope>
</reference>
<reference key="12">
    <citation type="journal article" date="2014" name="Mol. Cell. Proteomics">
        <title>Immunoaffinity enrichment and mass spectrometry analysis of protein methylation.</title>
        <authorList>
            <person name="Guo A."/>
            <person name="Gu H."/>
            <person name="Zhou J."/>
            <person name="Mulhern D."/>
            <person name="Wang Y."/>
            <person name="Lee K.A."/>
            <person name="Yang V."/>
            <person name="Aguiar M."/>
            <person name="Kornhauser J."/>
            <person name="Jia X."/>
            <person name="Ren J."/>
            <person name="Beausoleil S.A."/>
            <person name="Silva J.C."/>
            <person name="Vemulapalli V."/>
            <person name="Bedford M.T."/>
            <person name="Comb M.J."/>
        </authorList>
    </citation>
    <scope>METHYLATION [LARGE SCALE ANALYSIS] AT ARG-32</scope>
    <scope>IDENTIFICATION BY MASS SPECTROMETRY [LARGE SCALE ANALYSIS]</scope>
    <source>
        <tissue>Brain</tissue>
        <tissue>Embryo</tissue>
    </source>
</reference>
<reference key="13">
    <citation type="journal article" date="2016" name="EMBO J.">
        <title>HDAC6 regulates cellular viral RNA sensing by deacetylation of RIG-I.</title>
        <authorList>
            <person name="Choi S.J."/>
            <person name="Lee H.C."/>
            <person name="Kim J.H."/>
            <person name="Park S.Y."/>
            <person name="Kim T.H."/>
            <person name="Lee W.K."/>
            <person name="Jang D.J."/>
            <person name="Yoon J.E."/>
            <person name="Choi Y.I."/>
            <person name="Kim S."/>
            <person name="Ma J."/>
            <person name="Kim C.J."/>
            <person name="Yao T.P."/>
            <person name="Jung J.U."/>
            <person name="Lee J.Y."/>
            <person name="Lee J.S."/>
        </authorList>
    </citation>
    <scope>FUNCTION</scope>
    <scope>DISRUPTION PHENOTYPE</scope>
</reference>
<reference key="14">
    <citation type="journal article" date="2016" name="EMBO Rep.">
        <title>Rescue of CAMDI deletion-induced delayed radial migration and psychiatric behaviors by HDAC6 inhibitor.</title>
        <authorList>
            <person name="Fukuda T."/>
            <person name="Nagashima S."/>
            <person name="Abe T."/>
            <person name="Kiyonari H."/>
            <person name="Inatome R."/>
            <person name="Yanagi S."/>
        </authorList>
    </citation>
    <scope>INTERACTION WITH CCDC141</scope>
    <scope>FUNCTION</scope>
</reference>
<reference key="15">
    <citation type="journal article" date="2022" name="Stem Cells">
        <title>IPO7 Promotes Odontoblastic Differentiation and Inhibits Osteoblastic Differentiation Through Regulation of RUNX2 Expression and Translocation.</title>
        <authorList>
            <person name="Zhang Y."/>
            <person name="Zhang H."/>
            <person name="Xiao Z."/>
            <person name="Yuan G."/>
            <person name="Yang G."/>
        </authorList>
    </citation>
    <scope>FUNCTION</scope>
    <scope>INTERACTION WITH IPO7</scope>
    <scope>SUBCELLULAR LOCATION</scope>
</reference>
<dbReference type="EC" id="3.5.1.-" evidence="2 7 8"/>
<dbReference type="EMBL" id="AF006603">
    <property type="protein sequence ID" value="AAD09835.2"/>
    <property type="molecule type" value="mRNA"/>
</dbReference>
<dbReference type="EMBL" id="AL670169">
    <property type="status" value="NOT_ANNOTATED_CDS"/>
    <property type="molecule type" value="Genomic_DNA"/>
</dbReference>
<dbReference type="CCDS" id="CCDS40845.1"/>
<dbReference type="PIR" id="T13964">
    <property type="entry name" value="T13964"/>
</dbReference>
<dbReference type="RefSeq" id="NP_001123888.1">
    <property type="nucleotide sequence ID" value="NM_001130416.2"/>
</dbReference>
<dbReference type="RefSeq" id="NP_001398535.1">
    <property type="nucleotide sequence ID" value="NM_001411606.1"/>
</dbReference>
<dbReference type="RefSeq" id="NP_001398536.1">
    <property type="nucleotide sequence ID" value="NM_001411607.1"/>
</dbReference>
<dbReference type="RefSeq" id="NP_034543.3">
    <property type="nucleotide sequence ID" value="NM_010413.3"/>
</dbReference>
<dbReference type="RefSeq" id="XP_006527630.1">
    <property type="nucleotide sequence ID" value="XM_006527567.2"/>
</dbReference>
<dbReference type="RefSeq" id="XP_017173877.1">
    <property type="nucleotide sequence ID" value="XM_017318388.1"/>
</dbReference>
<dbReference type="RefSeq" id="XP_017173878.1">
    <property type="nucleotide sequence ID" value="XM_017318389.3"/>
</dbReference>
<dbReference type="RefSeq" id="XP_036017717.1">
    <property type="nucleotide sequence ID" value="XM_036161824.1"/>
</dbReference>
<dbReference type="SMR" id="Q9Z2V5"/>
<dbReference type="BioGRID" id="200263">
    <property type="interactions" value="62"/>
</dbReference>
<dbReference type="CORUM" id="Q9Z2V5"/>
<dbReference type="DIP" id="DIP-36461N"/>
<dbReference type="FunCoup" id="Q9Z2V5">
    <property type="interactions" value="1961"/>
</dbReference>
<dbReference type="IntAct" id="Q9Z2V5">
    <property type="interactions" value="43"/>
</dbReference>
<dbReference type="MINT" id="Q9Z2V5"/>
<dbReference type="STRING" id="10090.ENSMUSP00000033501"/>
<dbReference type="BindingDB" id="Q9Z2V5"/>
<dbReference type="ChEMBL" id="CHEMBL2878"/>
<dbReference type="DrugCentral" id="Q9Z2V5"/>
<dbReference type="GlyGen" id="Q9Z2V5">
    <property type="glycosylation" value="4 sites, 1 N-linked glycan (1 site), 1 O-linked glycan (2 sites)"/>
</dbReference>
<dbReference type="iPTMnet" id="Q9Z2V5"/>
<dbReference type="PhosphoSitePlus" id="Q9Z2V5"/>
<dbReference type="jPOST" id="Q9Z2V5"/>
<dbReference type="PaxDb" id="10090-ENSMUSP00000111306"/>
<dbReference type="PeptideAtlas" id="Q9Z2V5"/>
<dbReference type="ProteomicsDB" id="269771"/>
<dbReference type="Pumba" id="Q9Z2V5"/>
<dbReference type="Antibodypedia" id="3788">
    <property type="antibodies" value="1154 antibodies from 47 providers"/>
</dbReference>
<dbReference type="DNASU" id="15185"/>
<dbReference type="Ensembl" id="ENSMUST00000033501.15">
    <property type="protein sequence ID" value="ENSMUSP00000033501.9"/>
    <property type="gene ID" value="ENSMUSG00000031161.16"/>
</dbReference>
<dbReference type="Ensembl" id="ENSMUST00000115642.8">
    <property type="protein sequence ID" value="ENSMUSP00000111306.2"/>
    <property type="gene ID" value="ENSMUSG00000031161.16"/>
</dbReference>
<dbReference type="GeneID" id="15185"/>
<dbReference type="KEGG" id="mmu:15185"/>
<dbReference type="UCSC" id="uc009snh.2">
    <property type="organism name" value="mouse"/>
</dbReference>
<dbReference type="AGR" id="MGI:1333752"/>
<dbReference type="CTD" id="10013"/>
<dbReference type="MGI" id="MGI:1333752">
    <property type="gene designation" value="Hdac6"/>
</dbReference>
<dbReference type="VEuPathDB" id="HostDB:ENSMUSG00000031161"/>
<dbReference type="eggNOG" id="KOG1343">
    <property type="taxonomic scope" value="Eukaryota"/>
</dbReference>
<dbReference type="GeneTree" id="ENSGT00940000159563"/>
<dbReference type="HOGENOM" id="CLU_007727_2_1_1"/>
<dbReference type="InParanoid" id="Q9Z2V5"/>
<dbReference type="OMA" id="HTRSHVN"/>
<dbReference type="OrthoDB" id="424012at2759"/>
<dbReference type="PhylomeDB" id="Q9Z2V5"/>
<dbReference type="TreeFam" id="TF106173"/>
<dbReference type="BRENDA" id="3.5.1.98">
    <property type="organism ID" value="3474"/>
</dbReference>
<dbReference type="Reactome" id="R-MMU-3371511">
    <property type="pathway name" value="HSF1 activation"/>
</dbReference>
<dbReference type="Reactome" id="R-MMU-350054">
    <property type="pathway name" value="Notch-HLH transcription pathway"/>
</dbReference>
<dbReference type="Reactome" id="R-MMU-5617833">
    <property type="pathway name" value="Cilium Assembly"/>
</dbReference>
<dbReference type="Reactome" id="R-MMU-9646399">
    <property type="pathway name" value="Aggrephagy"/>
</dbReference>
<dbReference type="UniPathway" id="UPA00143"/>
<dbReference type="BioGRID-ORCS" id="15185">
    <property type="hits" value="3 hits in 81 CRISPR screens"/>
</dbReference>
<dbReference type="PRO" id="PR:Q9Z2V5"/>
<dbReference type="Proteomes" id="UP000000589">
    <property type="component" value="Chromosome X"/>
</dbReference>
<dbReference type="RNAct" id="Q9Z2V5">
    <property type="molecule type" value="protein"/>
</dbReference>
<dbReference type="Bgee" id="ENSMUSG00000031161">
    <property type="expression patterns" value="Expressed in entorhinal cortex and 255 other cell types or tissues"/>
</dbReference>
<dbReference type="ExpressionAtlas" id="Q9Z2V5">
    <property type="expression patterns" value="baseline and differential"/>
</dbReference>
<dbReference type="GO" id="GO:0016235">
    <property type="term" value="C:aggresome"/>
    <property type="evidence" value="ECO:0007669"/>
    <property type="project" value="Ensembl"/>
</dbReference>
<dbReference type="GO" id="GO:0030424">
    <property type="term" value="C:axon"/>
    <property type="evidence" value="ECO:0000314"/>
    <property type="project" value="UniProtKB"/>
</dbReference>
<dbReference type="GO" id="GO:1904115">
    <property type="term" value="C:axon cytoplasm"/>
    <property type="evidence" value="ECO:0007669"/>
    <property type="project" value="GOC"/>
</dbReference>
<dbReference type="GO" id="GO:0005901">
    <property type="term" value="C:caveola"/>
    <property type="evidence" value="ECO:0007669"/>
    <property type="project" value="Ensembl"/>
</dbReference>
<dbReference type="GO" id="GO:0031252">
    <property type="term" value="C:cell leading edge"/>
    <property type="evidence" value="ECO:0007669"/>
    <property type="project" value="Ensembl"/>
</dbReference>
<dbReference type="GO" id="GO:0005813">
    <property type="term" value="C:centrosome"/>
    <property type="evidence" value="ECO:0007669"/>
    <property type="project" value="UniProtKB-SubCell"/>
</dbReference>
<dbReference type="GO" id="GO:0036064">
    <property type="term" value="C:ciliary basal body"/>
    <property type="evidence" value="ECO:0007669"/>
    <property type="project" value="Ensembl"/>
</dbReference>
<dbReference type="GO" id="GO:0005737">
    <property type="term" value="C:cytoplasm"/>
    <property type="evidence" value="ECO:0000314"/>
    <property type="project" value="UniProtKB"/>
</dbReference>
<dbReference type="GO" id="GO:0005829">
    <property type="term" value="C:cytosol"/>
    <property type="evidence" value="ECO:0000314"/>
    <property type="project" value="UniProtKB"/>
</dbReference>
<dbReference type="GO" id="GO:0030425">
    <property type="term" value="C:dendrite"/>
    <property type="evidence" value="ECO:0000314"/>
    <property type="project" value="UniProtKB"/>
</dbReference>
<dbReference type="GO" id="GO:0000118">
    <property type="term" value="C:histone deacetylase complex"/>
    <property type="evidence" value="ECO:0007669"/>
    <property type="project" value="Ensembl"/>
</dbReference>
<dbReference type="GO" id="GO:0005874">
    <property type="term" value="C:microtubule"/>
    <property type="evidence" value="ECO:0007669"/>
    <property type="project" value="Ensembl"/>
</dbReference>
<dbReference type="GO" id="GO:0005875">
    <property type="term" value="C:microtubule associated complex"/>
    <property type="evidence" value="ECO:0007669"/>
    <property type="project" value="Ensembl"/>
</dbReference>
<dbReference type="GO" id="GO:0015630">
    <property type="term" value="C:microtubule cytoskeleton"/>
    <property type="evidence" value="ECO:0000314"/>
    <property type="project" value="MGI"/>
</dbReference>
<dbReference type="GO" id="GO:0043005">
    <property type="term" value="C:neuron projection"/>
    <property type="evidence" value="ECO:0000314"/>
    <property type="project" value="MGI"/>
</dbReference>
<dbReference type="GO" id="GO:0043025">
    <property type="term" value="C:neuronal cell body"/>
    <property type="evidence" value="ECO:0000314"/>
    <property type="project" value="MGI"/>
</dbReference>
<dbReference type="GO" id="GO:0005634">
    <property type="term" value="C:nucleus"/>
    <property type="evidence" value="ECO:0000314"/>
    <property type="project" value="UniProtKB"/>
</dbReference>
<dbReference type="GO" id="GO:0043204">
    <property type="term" value="C:perikaryon"/>
    <property type="evidence" value="ECO:0000314"/>
    <property type="project" value="UniProtKB"/>
</dbReference>
<dbReference type="GO" id="GO:0048471">
    <property type="term" value="C:perinuclear region of cytoplasm"/>
    <property type="evidence" value="ECO:0007669"/>
    <property type="project" value="Ensembl"/>
</dbReference>
<dbReference type="GO" id="GO:0032991">
    <property type="term" value="C:protein-containing complex"/>
    <property type="evidence" value="ECO:0000353"/>
    <property type="project" value="MGI"/>
</dbReference>
<dbReference type="GO" id="GO:0003779">
    <property type="term" value="F:actin binding"/>
    <property type="evidence" value="ECO:0007669"/>
    <property type="project" value="UniProtKB-KW"/>
</dbReference>
<dbReference type="GO" id="GO:0043014">
    <property type="term" value="F:alpha-tubulin binding"/>
    <property type="evidence" value="ECO:0007669"/>
    <property type="project" value="Ensembl"/>
</dbReference>
<dbReference type="GO" id="GO:0042030">
    <property type="term" value="F:ATPase inhibitor activity"/>
    <property type="evidence" value="ECO:0007669"/>
    <property type="project" value="Ensembl"/>
</dbReference>
<dbReference type="GO" id="GO:0008013">
    <property type="term" value="F:beta-catenin binding"/>
    <property type="evidence" value="ECO:0007669"/>
    <property type="project" value="Ensembl"/>
</dbReference>
<dbReference type="GO" id="GO:0048487">
    <property type="term" value="F:beta-tubulin binding"/>
    <property type="evidence" value="ECO:0000314"/>
    <property type="project" value="MGI"/>
</dbReference>
<dbReference type="GO" id="GO:0070840">
    <property type="term" value="F:dynein complex binding"/>
    <property type="evidence" value="ECO:0007669"/>
    <property type="project" value="Ensembl"/>
</dbReference>
<dbReference type="GO" id="GO:0004407">
    <property type="term" value="F:histone deacetylase activity"/>
    <property type="evidence" value="ECO:0000314"/>
    <property type="project" value="MGI"/>
</dbReference>
<dbReference type="GO" id="GO:0141221">
    <property type="term" value="F:histone deacetylase activity, hydrolytic mechanism"/>
    <property type="evidence" value="ECO:0007669"/>
    <property type="project" value="UniProtKB-EC"/>
</dbReference>
<dbReference type="GO" id="GO:0042826">
    <property type="term" value="F:histone deacetylase binding"/>
    <property type="evidence" value="ECO:0007669"/>
    <property type="project" value="Ensembl"/>
</dbReference>
<dbReference type="GO" id="GO:0051879">
    <property type="term" value="F:Hsp90 protein binding"/>
    <property type="evidence" value="ECO:0007669"/>
    <property type="project" value="Ensembl"/>
</dbReference>
<dbReference type="GO" id="GO:0008017">
    <property type="term" value="F:microtubule binding"/>
    <property type="evidence" value="ECO:0000314"/>
    <property type="project" value="UniProtKB"/>
</dbReference>
<dbReference type="GO" id="GO:0036479">
    <property type="term" value="F:peroxidase inhibitor activity"/>
    <property type="evidence" value="ECO:0007669"/>
    <property type="project" value="Ensembl"/>
</dbReference>
<dbReference type="GO" id="GO:0031593">
    <property type="term" value="F:polyubiquitin modification-dependent protein binding"/>
    <property type="evidence" value="ECO:0007669"/>
    <property type="project" value="Ensembl"/>
</dbReference>
<dbReference type="GO" id="GO:0033558">
    <property type="term" value="F:protein lysine deacetylase activity"/>
    <property type="evidence" value="ECO:0000315"/>
    <property type="project" value="ARUK-UCL"/>
</dbReference>
<dbReference type="GO" id="GO:0000978">
    <property type="term" value="F:RNA polymerase II cis-regulatory region sequence-specific DNA binding"/>
    <property type="evidence" value="ECO:0007669"/>
    <property type="project" value="Ensembl"/>
</dbReference>
<dbReference type="GO" id="GO:0048156">
    <property type="term" value="F:tau protein binding"/>
    <property type="evidence" value="ECO:0000353"/>
    <property type="project" value="ARUK-UCL"/>
</dbReference>
<dbReference type="GO" id="GO:0001222">
    <property type="term" value="F:transcription corepressor binding"/>
    <property type="evidence" value="ECO:0007669"/>
    <property type="project" value="Ensembl"/>
</dbReference>
<dbReference type="GO" id="GO:0042903">
    <property type="term" value="F:tubulin deacetylase activity"/>
    <property type="evidence" value="ECO:0000314"/>
    <property type="project" value="UniProtKB"/>
</dbReference>
<dbReference type="GO" id="GO:0043130">
    <property type="term" value="F:ubiquitin binding"/>
    <property type="evidence" value="ECO:0000314"/>
    <property type="project" value="MGI"/>
</dbReference>
<dbReference type="GO" id="GO:0061630">
    <property type="term" value="F:ubiquitin protein ligase activity"/>
    <property type="evidence" value="ECO:0007669"/>
    <property type="project" value="Ensembl"/>
</dbReference>
<dbReference type="GO" id="GO:0031625">
    <property type="term" value="F:ubiquitin protein ligase binding"/>
    <property type="evidence" value="ECO:0007669"/>
    <property type="project" value="Ensembl"/>
</dbReference>
<dbReference type="GO" id="GO:0160233">
    <property type="term" value="F:valine sensor activity"/>
    <property type="evidence" value="ECO:0007669"/>
    <property type="project" value="Ensembl"/>
</dbReference>
<dbReference type="GO" id="GO:0008270">
    <property type="term" value="F:zinc ion binding"/>
    <property type="evidence" value="ECO:0007669"/>
    <property type="project" value="UniProtKB-KW"/>
</dbReference>
<dbReference type="GO" id="GO:0007015">
    <property type="term" value="P:actin filament organization"/>
    <property type="evidence" value="ECO:0000315"/>
    <property type="project" value="MGI"/>
</dbReference>
<dbReference type="GO" id="GO:0070842">
    <property type="term" value="P:aggresome assembly"/>
    <property type="evidence" value="ECO:0000316"/>
    <property type="project" value="MGI"/>
</dbReference>
<dbReference type="GO" id="GO:0019896">
    <property type="term" value="P:axonal transport of mitochondrion"/>
    <property type="evidence" value="ECO:0007669"/>
    <property type="project" value="Ensembl"/>
</dbReference>
<dbReference type="GO" id="GO:0070301">
    <property type="term" value="P:cellular response to hydrogen peroxide"/>
    <property type="evidence" value="ECO:0007669"/>
    <property type="project" value="Ensembl"/>
</dbReference>
<dbReference type="GO" id="GO:0071218">
    <property type="term" value="P:cellular response to misfolded protein"/>
    <property type="evidence" value="ECO:0000315"/>
    <property type="project" value="MGI"/>
</dbReference>
<dbReference type="GO" id="GO:0071374">
    <property type="term" value="P:cellular response to parathyroid hormone stimulus"/>
    <property type="evidence" value="ECO:0007669"/>
    <property type="project" value="Ensembl"/>
</dbReference>
<dbReference type="GO" id="GO:0061523">
    <property type="term" value="P:cilium disassembly"/>
    <property type="evidence" value="ECO:0007669"/>
    <property type="project" value="Ensembl"/>
</dbReference>
<dbReference type="GO" id="GO:0048668">
    <property type="term" value="P:collateral sprouting"/>
    <property type="evidence" value="ECO:0000315"/>
    <property type="project" value="MGI"/>
</dbReference>
<dbReference type="GO" id="GO:0060997">
    <property type="term" value="P:dendritic spine morphogenesis"/>
    <property type="evidence" value="ECO:0000315"/>
    <property type="project" value="MGI"/>
</dbReference>
<dbReference type="GO" id="GO:0007173">
    <property type="term" value="P:epidermal growth factor receptor signaling pathway"/>
    <property type="evidence" value="ECO:0007669"/>
    <property type="project" value="Ensembl"/>
</dbReference>
<dbReference type="GO" id="GO:0043131">
    <property type="term" value="P:erythrocyte enucleation"/>
    <property type="evidence" value="ECO:0000315"/>
    <property type="project" value="MGI"/>
</dbReference>
<dbReference type="GO" id="GO:0032418">
    <property type="term" value="P:lysosome localization"/>
    <property type="evidence" value="ECO:0007669"/>
    <property type="project" value="Ensembl"/>
</dbReference>
<dbReference type="GO" id="GO:0051646">
    <property type="term" value="P:mitochondrion localization"/>
    <property type="evidence" value="ECO:0000315"/>
    <property type="project" value="ParkinsonsUK-UCL"/>
</dbReference>
<dbReference type="GO" id="GO:1905336">
    <property type="term" value="P:negative regulation of aggrephagy"/>
    <property type="evidence" value="ECO:0007669"/>
    <property type="project" value="Ensembl"/>
</dbReference>
<dbReference type="GO" id="GO:0048843">
    <property type="term" value="P:negative regulation of axon extension involved in axon guidance"/>
    <property type="evidence" value="ECO:0007669"/>
    <property type="project" value="Ensembl"/>
</dbReference>
<dbReference type="GO" id="GO:0045814">
    <property type="term" value="P:negative regulation of gene expression, epigenetic"/>
    <property type="evidence" value="ECO:0007669"/>
    <property type="project" value="Ensembl"/>
</dbReference>
<dbReference type="GO" id="GO:0010727">
    <property type="term" value="P:negative regulation of hydrogen peroxide metabolic process"/>
    <property type="evidence" value="ECO:0007669"/>
    <property type="project" value="Ensembl"/>
</dbReference>
<dbReference type="GO" id="GO:0007026">
    <property type="term" value="P:negative regulation of microtubule depolymerization"/>
    <property type="evidence" value="ECO:0000314"/>
    <property type="project" value="MGI"/>
</dbReference>
<dbReference type="GO" id="GO:0031333">
    <property type="term" value="P:negative regulation of protein-containing complex assembly"/>
    <property type="evidence" value="ECO:0007669"/>
    <property type="project" value="Ensembl"/>
</dbReference>
<dbReference type="GO" id="GO:0045861">
    <property type="term" value="P:negative regulation of proteolysis"/>
    <property type="evidence" value="ECO:0007669"/>
    <property type="project" value="Ensembl"/>
</dbReference>
<dbReference type="GO" id="GO:0070845">
    <property type="term" value="P:polyubiquitinated misfolded protein transport"/>
    <property type="evidence" value="ECO:0007669"/>
    <property type="project" value="Ensembl"/>
</dbReference>
<dbReference type="GO" id="GO:1900409">
    <property type="term" value="P:positive regulation of cellular response to oxidative stress"/>
    <property type="evidence" value="ECO:0007669"/>
    <property type="project" value="Ensembl"/>
</dbReference>
<dbReference type="GO" id="GO:1904056">
    <property type="term" value="P:positive regulation of cholangiocyte proliferation"/>
    <property type="evidence" value="ECO:0007669"/>
    <property type="project" value="Ensembl"/>
</dbReference>
<dbReference type="GO" id="GO:0050775">
    <property type="term" value="P:positive regulation of dendrite morphogenesis"/>
    <property type="evidence" value="ECO:0007669"/>
    <property type="project" value="Ensembl"/>
</dbReference>
<dbReference type="GO" id="GO:0010634">
    <property type="term" value="P:positive regulation of epithelial cell migration"/>
    <property type="evidence" value="ECO:0007669"/>
    <property type="project" value="Ensembl"/>
</dbReference>
<dbReference type="GO" id="GO:0033148">
    <property type="term" value="P:positive regulation of intracellular estrogen receptor signaling pathway"/>
    <property type="evidence" value="ECO:0007669"/>
    <property type="project" value="Ensembl"/>
</dbReference>
<dbReference type="GO" id="GO:0032461">
    <property type="term" value="P:positive regulation of protein oligomerization"/>
    <property type="evidence" value="ECO:0000315"/>
    <property type="project" value="ARUK-UCL"/>
</dbReference>
<dbReference type="GO" id="GO:0051968">
    <property type="term" value="P:positive regulation of synaptic transmission, glutamatergic"/>
    <property type="evidence" value="ECO:0007669"/>
    <property type="project" value="Ensembl"/>
</dbReference>
<dbReference type="GO" id="GO:1905091">
    <property type="term" value="P:positive regulation of type 2 mitophagy"/>
    <property type="evidence" value="ECO:0000316"/>
    <property type="project" value="ParkinsonsUK-UCL"/>
</dbReference>
<dbReference type="GO" id="GO:0031648">
    <property type="term" value="P:protein destabilization"/>
    <property type="evidence" value="ECO:0000315"/>
    <property type="project" value="CACAO"/>
</dbReference>
<dbReference type="GO" id="GO:0000209">
    <property type="term" value="P:protein polyubiquitination"/>
    <property type="evidence" value="ECO:0000314"/>
    <property type="project" value="MGI"/>
</dbReference>
<dbReference type="GO" id="GO:0006515">
    <property type="term" value="P:protein quality control for misfolded or incompletely synthesized proteins"/>
    <property type="evidence" value="ECO:0007669"/>
    <property type="project" value="Ensembl"/>
</dbReference>
<dbReference type="GO" id="GO:0032984">
    <property type="term" value="P:protein-containing complex disassembly"/>
    <property type="evidence" value="ECO:0000316"/>
    <property type="project" value="MGI"/>
</dbReference>
<dbReference type="GO" id="GO:0070201">
    <property type="term" value="P:regulation of establishment of protein localization"/>
    <property type="evidence" value="ECO:0000315"/>
    <property type="project" value="MGI"/>
</dbReference>
<dbReference type="GO" id="GO:0045598">
    <property type="term" value="P:regulation of fat cell differentiation"/>
    <property type="evidence" value="ECO:0000315"/>
    <property type="project" value="MGI"/>
</dbReference>
<dbReference type="GO" id="GO:0010821">
    <property type="term" value="P:regulation of mitochondrion organization"/>
    <property type="evidence" value="ECO:0007669"/>
    <property type="project" value="Ensembl"/>
</dbReference>
<dbReference type="GO" id="GO:0001975">
    <property type="term" value="P:response to amphetamine"/>
    <property type="evidence" value="ECO:0007669"/>
    <property type="project" value="Ensembl"/>
</dbReference>
<dbReference type="GO" id="GO:0051412">
    <property type="term" value="P:response to corticosterone"/>
    <property type="evidence" value="ECO:0007669"/>
    <property type="project" value="Ensembl"/>
</dbReference>
<dbReference type="GO" id="GO:0071548">
    <property type="term" value="P:response to dexamethasone"/>
    <property type="evidence" value="ECO:0007669"/>
    <property type="project" value="Ensembl"/>
</dbReference>
<dbReference type="GO" id="GO:0035902">
    <property type="term" value="P:response to immobilization stress"/>
    <property type="evidence" value="ECO:0007669"/>
    <property type="project" value="Ensembl"/>
</dbReference>
<dbReference type="GO" id="GO:0090042">
    <property type="term" value="P:tubulin deacetylation"/>
    <property type="evidence" value="ECO:0000314"/>
    <property type="project" value="UniProtKB"/>
</dbReference>
<dbReference type="GO" id="GO:0061734">
    <property type="term" value="P:type 2 mitophagy"/>
    <property type="evidence" value="ECO:0007669"/>
    <property type="project" value="Ensembl"/>
</dbReference>
<dbReference type="GO" id="GO:0006511">
    <property type="term" value="P:ubiquitin-dependent protein catabolic process"/>
    <property type="evidence" value="ECO:0000315"/>
    <property type="project" value="MGI"/>
</dbReference>
<dbReference type="GO" id="GO:0043162">
    <property type="term" value="P:ubiquitin-dependent protein catabolic process via the multivesicular body sorting pathway"/>
    <property type="evidence" value="ECO:0000315"/>
    <property type="project" value="MGI"/>
</dbReference>
<dbReference type="CDD" id="cd10003">
    <property type="entry name" value="HDAC6-dom2"/>
    <property type="match status" value="1"/>
</dbReference>
<dbReference type="FunFam" id="3.30.40.10:FF:000342">
    <property type="entry name" value="Histone deacetylase 6"/>
    <property type="match status" value="1"/>
</dbReference>
<dbReference type="FunFam" id="3.40.800.20:FF:000005">
    <property type="entry name" value="histone deacetylase 6"/>
    <property type="match status" value="2"/>
</dbReference>
<dbReference type="Gene3D" id="3.40.800.20">
    <property type="entry name" value="Histone deacetylase domain"/>
    <property type="match status" value="2"/>
</dbReference>
<dbReference type="Gene3D" id="3.30.40.10">
    <property type="entry name" value="Zinc/RING finger domain, C3HC4 (zinc finger)"/>
    <property type="match status" value="1"/>
</dbReference>
<dbReference type="InterPro" id="IPR050284">
    <property type="entry name" value="HDAC_PDAC"/>
</dbReference>
<dbReference type="InterPro" id="IPR000286">
    <property type="entry name" value="His_deacetylse"/>
</dbReference>
<dbReference type="InterPro" id="IPR023801">
    <property type="entry name" value="His_deacetylse_dom"/>
</dbReference>
<dbReference type="InterPro" id="IPR037138">
    <property type="entry name" value="His_deacetylse_dom_sf"/>
</dbReference>
<dbReference type="InterPro" id="IPR023696">
    <property type="entry name" value="Ureohydrolase_dom_sf"/>
</dbReference>
<dbReference type="InterPro" id="IPR013083">
    <property type="entry name" value="Znf_RING/FYVE/PHD"/>
</dbReference>
<dbReference type="InterPro" id="IPR001607">
    <property type="entry name" value="Znf_UBP"/>
</dbReference>
<dbReference type="PANTHER" id="PTHR10625:SF21">
    <property type="entry name" value="HISTONE DEACETYLASE 6"/>
    <property type="match status" value="1"/>
</dbReference>
<dbReference type="PANTHER" id="PTHR10625">
    <property type="entry name" value="HISTONE DEACETYLASE HDAC1-RELATED"/>
    <property type="match status" value="1"/>
</dbReference>
<dbReference type="Pfam" id="PF00850">
    <property type="entry name" value="Hist_deacetyl"/>
    <property type="match status" value="2"/>
</dbReference>
<dbReference type="Pfam" id="PF02148">
    <property type="entry name" value="zf-UBP"/>
    <property type="match status" value="1"/>
</dbReference>
<dbReference type="PRINTS" id="PR01270">
    <property type="entry name" value="HDASUPER"/>
</dbReference>
<dbReference type="SMART" id="SM00290">
    <property type="entry name" value="ZnF_UBP"/>
    <property type="match status" value="1"/>
</dbReference>
<dbReference type="SUPFAM" id="SSF52768">
    <property type="entry name" value="Arginase/deacetylase"/>
    <property type="match status" value="2"/>
</dbReference>
<dbReference type="SUPFAM" id="SSF57850">
    <property type="entry name" value="RING/U-box"/>
    <property type="match status" value="1"/>
</dbReference>
<dbReference type="PROSITE" id="PS50271">
    <property type="entry name" value="ZF_UBP"/>
    <property type="match status" value="1"/>
</dbReference>
<comment type="function">
    <text evidence="1 2 7 8 10 12 13 14 15 16">Deacetylates a wide range of non-histone substrates (PubMed:12606581, PubMed:19893491, PubMed:26746851, PubMed:27737934). Plays a central role in microtubule-dependent cell motility by mediating deacetylation of tubulin (PubMed:19893491, PubMed:27737934, PubMed:12606581). Required for cilia disassembly via deacetylation of alpha-tubulin (By similarity). Alpha-tubulin deacetylation results in destabilization of dynamic microtubules (PubMed:12486003). Promotes deacetylation of CTTN, leading to actin polymerization, promotion of autophagosome-lysosome fusion and completion of autophagy (By similarity). Deacetylates SQSTM1 (By similarity). Deacetylates peroxiredoxins PRDX1 and PRDX2, decreasing their reducing activity (By similarity). Deacetylates antiviral protein RIGI in the presence of viral mRNAs which is required for viral RNA detection by RIGI (PubMed:26746851). Sequentially deacetylates and polyubiquitinates DNA mismatch repair protein MSH2 which leads to MSH2 degradation, reducing cellular sensitivity to DNA-damaging agents and decreasing cellular DNA mismatch repair activities (By similarity). Deacetylates DNA mismatch repair protein MLH1 which prevents recruitment of the MutL alpha complex (formed by the MLH1-PMS2 heterodimer) to the MutS alpha complex (formed by the MSH2-MSH6 heterodimer), leading to tolerance of DNA damage (By similarity). Deacetylates RHOT1/MIRO1 which blocks mitochondrial transport and mediates axon growth inhibition (By similarity). Deacetylates transcription factor SP1 which leads to increased expression of ENG, positively regulating angiogenesis (By similarity). Deacetylates KHDRBS1/SAM68 which regulates alternative splicing by inhibiting the inclusion of CD44 alternate exons (By similarity). Promotes odontoblast differentiation following IPO7-mediated nuclear import and subsequent repression of RUNX2 expression (PubMed:35922041). In addition to its protein deacetylase activity, plays a key role in the degradation of misfolded proteins: when misfolded proteins are too abundant to be degraded by the chaperone refolding system and the ubiquitin-proteasome, mediates the transport of misfolded proteins to a cytoplasmic juxtanuclear structure called aggresome (By similarity). Probably acts as an adapter that recognizes polyubiquitinated misfolded proteins and target them to the aggresome, facilitating their clearance by autophagy (PubMed:22819792).</text>
</comment>
<comment type="catalytic activity">
    <reaction evidence="2">
        <text>N(6)-acetyl-L-lysyl-[protein] + H2O = L-lysyl-[protein] + acetate</text>
        <dbReference type="Rhea" id="RHEA:58108"/>
        <dbReference type="Rhea" id="RHEA-COMP:9752"/>
        <dbReference type="Rhea" id="RHEA-COMP:10731"/>
        <dbReference type="ChEBI" id="CHEBI:15377"/>
        <dbReference type="ChEBI" id="CHEBI:29969"/>
        <dbReference type="ChEBI" id="CHEBI:30089"/>
        <dbReference type="ChEBI" id="CHEBI:61930"/>
    </reaction>
    <physiologicalReaction direction="left-to-right" evidence="2">
        <dbReference type="Rhea" id="RHEA:58109"/>
    </physiologicalReaction>
</comment>
<comment type="catalytic activity">
    <reaction evidence="7 8">
        <text>N(6)-acetyl-L-lysyl-[alpha-tubulin] + H2O = L-lysyl-[alpha-tubulin] + acetate</text>
        <dbReference type="Rhea" id="RHEA:21548"/>
        <dbReference type="Rhea" id="RHEA-COMP:11278"/>
        <dbReference type="Rhea" id="RHEA-COMP:11279"/>
        <dbReference type="ChEBI" id="CHEBI:15377"/>
        <dbReference type="ChEBI" id="CHEBI:29969"/>
        <dbReference type="ChEBI" id="CHEBI:30089"/>
        <dbReference type="ChEBI" id="CHEBI:61930"/>
    </reaction>
    <physiologicalReaction direction="left-to-right" evidence="7 8">
        <dbReference type="Rhea" id="RHEA:21549"/>
    </physiologicalReaction>
</comment>
<comment type="cofactor">
    <cofactor evidence="2">
        <name>Zn(2+)</name>
        <dbReference type="ChEBI" id="CHEBI:29105"/>
    </cofactor>
    <text evidence="2">Binds 3 Zn(2+) ions per subunit.</text>
</comment>
<comment type="pathway">
    <text evidence="2">Protein modification; protein ubiquitination.</text>
</comment>
<comment type="subunit">
    <text evidence="2 6 10 11 14 15">Forms a trimeric complex in the nucleus consisting of BANP, HDAC6 and KHDRBS1/SAM68; HDAC6 keeps KHDRBS1 in a deacetylated state which inhibits the inclusion of CD44 alternate exons (By similarity). The complex is disrupted by MAPK1/MAPK3-mediated phosphorylation of BANP which results in BANP export to the cytoplasm (By similarity). This facilitates acetylation of KHDRBS1 and CD44 variant exon inclusion (By similarity). Interacts with SIRT2 (via both phosphorylated, unphosphorylated, active or inactive forms); the interaction is necessary for the complex to interact with alpha-tubulin (By similarity). Under proteasome impairment conditions, interacts with UBD via its histone deacetylase 1 and UBP-type zinc-finger regions (By similarity). Interacts with BBIP1, CBFA2T3, CYLD, DDIT3/CHOP, ZMYND15, F-actin and HDAC11 (PubMed:11533236, PubMed:19893491, PubMed:20675388). Interacts with RIPOR2; this interaction occurs during early myogenic differentiation and prevents HDAC6 to deacetylate tubulin (By similarity). Interacts with AURKA; AURKA-mediated phosphorylation of HDAC6 promotes deacetylation of alpha-tubulin (By similarity). Interacts with DYSF; this interaction occurs during early myogenic differentiation (By similarity). Interacts with TPPP; inhibiting the tubulin deacetylase activity of HDAC6 (By similarity). Interacts with DYNLL1 (By similarity). Interacts with ATP13A2; the interaction results in recruitment of HDAC6 to lysosomes to promote CTTN deacetylation (By similarity). Interacts with CCDC141 (via the N-terminal region); inhibiting the deacetylase activity of HDAC6 (PubMed:27737934). Interacts with IPO7; the interaction facilitates HDAC6 nuclear translocation in dental papilla cells (PubMed:35922041).</text>
</comment>
<comment type="interaction">
    <interactant intactId="EBI-1009256">
        <id>Q9Z2V5</id>
    </interactant>
    <interactant intactId="EBI-298707">
        <id>P31750</id>
        <label>Akt1</label>
    </interactant>
    <organismsDiffer>false</organismsDiffer>
    <experiments>2</experiments>
</comment>
<comment type="interaction">
    <interactant intactId="EBI-1009256">
        <id>Q9Z2V5</id>
    </interactant>
    <interactant intactId="EBI-943859">
        <id>Q80TQ2</id>
        <label>Cyld</label>
    </interactant>
    <organismsDiffer>false</organismsDiffer>
    <experiments>3</experiments>
</comment>
<comment type="interaction">
    <interactant intactId="EBI-1009256">
        <id>Q9Z2V5</id>
    </interactant>
    <interactant intactId="EBI-645361">
        <id>Q99N13</id>
        <label>Hdac9</label>
    </interactant>
    <organismsDiffer>false</organismsDiffer>
    <experiments>2</experiments>
</comment>
<comment type="interaction">
    <interactant intactId="EBI-1009256">
        <id>Q9Z2V5</id>
    </interactant>
    <interactant intactId="EBI-772161">
        <id>O55131</id>
        <label>Septin7</label>
    </interactant>
    <organismsDiffer>false</organismsDiffer>
    <experiments>3</experiments>
</comment>
<comment type="interaction">
    <interactant intactId="EBI-1009256">
        <id>Q9Z2V5</id>
    </interactant>
    <interactant intactId="EBI-21448776">
        <id>D3ZEY0</id>
        <label>Ccdc141</label>
    </interactant>
    <organismsDiffer>true</organismsDiffer>
    <experiments>3</experiments>
</comment>
<comment type="interaction">
    <interactant intactId="EBI-1009256">
        <id>Q9Z2V5</id>
    </interactant>
    <interactant intactId="EBI-1036401">
        <id>P21146</id>
        <label>GRK2</label>
    </interactant>
    <organismsDiffer>true</organismsDiffer>
    <experiments>2</experiments>
</comment>
<comment type="interaction">
    <interactant intactId="EBI-1009256">
        <id>Q9Z2V5</id>
    </interactant>
    <interactant intactId="EBI-16124826">
        <id>P62973</id>
    </interactant>
    <organismsDiffer>true</organismsDiffer>
    <experiments>2</experiments>
</comment>
<comment type="subcellular location">
    <subcellularLocation>
        <location evidence="5 8 10 15">Cytoplasm</location>
    </subcellularLocation>
    <subcellularLocation>
        <location evidence="10">Cytoplasm</location>
        <location evidence="10">Cytoskeleton</location>
    </subcellularLocation>
    <subcellularLocation>
        <location evidence="5 10 15">Nucleus</location>
    </subcellularLocation>
    <subcellularLocation>
        <location evidence="9">Perikaryon</location>
    </subcellularLocation>
    <subcellularLocation>
        <location evidence="9">Cell projection</location>
        <location evidence="9">Dendrite</location>
    </subcellularLocation>
    <subcellularLocation>
        <location evidence="9">Cell projection</location>
        <location evidence="9">Axon</location>
    </subcellularLocation>
    <subcellularLocation>
        <location evidence="2">Cell projection</location>
        <location evidence="2">Cilium</location>
    </subcellularLocation>
    <subcellularLocation>
        <location evidence="2">Cytoplasm</location>
        <location evidence="2">Cytoskeleton</location>
        <location evidence="2">Microtubule organizing center</location>
        <location evidence="2">Centrosome</location>
    </subcellularLocation>
    <subcellularLocation>
        <location evidence="2">Cytoplasm</location>
        <location evidence="2">Cytoskeleton</location>
        <location evidence="2">Cilium basal body</location>
    </subcellularLocation>
    <text evidence="5 10">Mainly cytoplasmic where it is associated with microtubules (PubMed:10873806, PubMed:19893491). Can shuttle between the cytoplasm and the nucleus (PubMed:10873806). Found exclusively in the cytoplasm in proliferative cells with a fraction found in the nucleus during differentiation (PubMed:10873806).</text>
</comment>
<comment type="tissue specificity">
    <text evidence="9 10">Expressed in neurons of the cortex. Expressed in Purkinje cells. Detected in keratinocytes (at protein level).</text>
</comment>
<comment type="domain">
    <text evidence="2">Histone deacetylase domain 1 mediates the E3 ubiquitin-protein ligase activity.</text>
</comment>
<comment type="PTM">
    <text evidence="2">Phosphorylated by AURKA; phosphorylation increases HDAC6-mediated deacetylation of alpha-tubulin and subsequent disassembly of cilia.</text>
</comment>
<comment type="PTM">
    <text evidence="2">Ubiquitinated. Its polyubiquitination however does not lead to its degradation.</text>
</comment>
<comment type="PTM">
    <text evidence="2">Sumoylated in vitro.</text>
</comment>
<comment type="disruption phenotype">
    <text evidence="13">Increased susceptibility to infection by vesicular stomatitis Indiana virus, reduced viral clearance and significantly decreased survival rate.</text>
</comment>
<comment type="similarity">
    <text evidence="18">Belongs to the histone deacetylase family. HD type 2 subfamily.</text>
</comment>
<comment type="caution">
    <text evidence="8 10 13 14 16">Was originally thought to be a histone deacetylase (PubMed:9891014). However, subsequent work has shown that it is predominantly cytoplasmic and deacetylates a range of non-histone substrates (PubMed:12606581, PubMed:19893491, PubMed:26746851, PubMed:27737934).</text>
</comment>
<evidence type="ECO:0000250" key="1">
    <source>
        <dbReference type="UniProtKB" id="D3ZVD8"/>
    </source>
</evidence>
<evidence type="ECO:0000250" key="2">
    <source>
        <dbReference type="UniProtKB" id="Q9UBN7"/>
    </source>
</evidence>
<evidence type="ECO:0000255" key="3">
    <source>
        <dbReference type="PROSITE-ProRule" id="PRU00502"/>
    </source>
</evidence>
<evidence type="ECO:0000256" key="4">
    <source>
        <dbReference type="SAM" id="MobiDB-lite"/>
    </source>
</evidence>
<evidence type="ECO:0000269" key="5">
    <source>
    </source>
</evidence>
<evidence type="ECO:0000269" key="6">
    <source>
    </source>
</evidence>
<evidence type="ECO:0000269" key="7">
    <source>
    </source>
</evidence>
<evidence type="ECO:0000269" key="8">
    <source>
    </source>
</evidence>
<evidence type="ECO:0000269" key="9">
    <source>
    </source>
</evidence>
<evidence type="ECO:0000269" key="10">
    <source>
    </source>
</evidence>
<evidence type="ECO:0000269" key="11">
    <source>
    </source>
</evidence>
<evidence type="ECO:0000269" key="12">
    <source>
    </source>
</evidence>
<evidence type="ECO:0000269" key="13">
    <source>
    </source>
</evidence>
<evidence type="ECO:0000269" key="14">
    <source>
    </source>
</evidence>
<evidence type="ECO:0000269" key="15">
    <source>
    </source>
</evidence>
<evidence type="ECO:0000269" key="16">
    <source>
    </source>
</evidence>
<evidence type="ECO:0000303" key="17">
    <source>
    </source>
</evidence>
<evidence type="ECO:0000305" key="18"/>
<evidence type="ECO:0000312" key="19">
    <source>
        <dbReference type="MGI" id="MGI:1333752"/>
    </source>
</evidence>
<evidence type="ECO:0007744" key="20">
    <source>
    </source>
</evidence>
<evidence type="ECO:0007744" key="21">
    <source>
    </source>
</evidence>
<protein>
    <recommendedName>
        <fullName evidence="18">Protein deacetylase HDAC6</fullName>
        <ecNumber evidence="2">3.5.1.-</ecNumber>
    </recommendedName>
    <alternativeName>
        <fullName evidence="18">Tubulin-lysine deacetylase HDAC6</fullName>
        <ecNumber evidence="7 8">3.5.1.-</ecNumber>
    </alternativeName>
    <alternativeName>
        <fullName evidence="17">mHDA2</fullName>
    </alternativeName>
</protein>